<dbReference type="EC" id="2.5.1.6" evidence="8"/>
<dbReference type="EMBL" id="AC006922">
    <property type="protein sequence ID" value="AAD31573.1"/>
    <property type="molecule type" value="Genomic_DNA"/>
</dbReference>
<dbReference type="EMBL" id="CP002685">
    <property type="protein sequence ID" value="AEC09310.1"/>
    <property type="molecule type" value="Genomic_DNA"/>
</dbReference>
<dbReference type="EMBL" id="CP002685">
    <property type="protein sequence ID" value="AEC09311.1"/>
    <property type="molecule type" value="Genomic_DNA"/>
</dbReference>
<dbReference type="EMBL" id="AF367310">
    <property type="protein sequence ID" value="AAK32897.1"/>
    <property type="molecule type" value="mRNA"/>
</dbReference>
<dbReference type="EMBL" id="AY133601">
    <property type="protein sequence ID" value="AAM91431.1"/>
    <property type="molecule type" value="mRNA"/>
</dbReference>
<dbReference type="PIR" id="G84785">
    <property type="entry name" value="G84785"/>
</dbReference>
<dbReference type="SMR" id="Q9SJL8"/>
<dbReference type="BioGRID" id="3604">
    <property type="interactions" value="7"/>
</dbReference>
<dbReference type="FunCoup" id="Q9SJL8">
    <property type="interactions" value="2641"/>
</dbReference>
<dbReference type="STRING" id="3702.Q9SJL8"/>
<dbReference type="MetOSite" id="Q9SJL8"/>
<dbReference type="PaxDb" id="3702-AT2G36880.2"/>
<dbReference type="ProteomicsDB" id="232238"/>
<dbReference type="EnsemblPlants" id="AT2G36880.1">
    <property type="protein sequence ID" value="AT2G36880.1"/>
    <property type="gene ID" value="AT2G36880"/>
</dbReference>
<dbReference type="EnsemblPlants" id="AT2G36880.2">
    <property type="protein sequence ID" value="AT2G36880.2"/>
    <property type="gene ID" value="AT2G36880"/>
</dbReference>
<dbReference type="GeneID" id="818260"/>
<dbReference type="Gramene" id="AT2G36880.1">
    <property type="protein sequence ID" value="AT2G36880.1"/>
    <property type="gene ID" value="AT2G36880"/>
</dbReference>
<dbReference type="Gramene" id="AT2G36880.2">
    <property type="protein sequence ID" value="AT2G36880.2"/>
    <property type="gene ID" value="AT2G36880"/>
</dbReference>
<dbReference type="KEGG" id="ath:AT2G36880"/>
<dbReference type="Araport" id="AT2G36880"/>
<dbReference type="TAIR" id="AT2G36880">
    <property type="gene designation" value="MAT3"/>
</dbReference>
<dbReference type="eggNOG" id="KOG1506">
    <property type="taxonomic scope" value="Eukaryota"/>
</dbReference>
<dbReference type="HOGENOM" id="CLU_041802_0_1_1"/>
<dbReference type="InParanoid" id="Q9SJL8"/>
<dbReference type="OMA" id="CKGLLEH"/>
<dbReference type="OrthoDB" id="1502901at2759"/>
<dbReference type="PhylomeDB" id="Q9SJL8"/>
<dbReference type="BioCyc" id="ARA:AT2G36880-MONOMER"/>
<dbReference type="BRENDA" id="2.5.1.6">
    <property type="organism ID" value="399"/>
</dbReference>
<dbReference type="UniPathway" id="UPA00315">
    <property type="reaction ID" value="UER00080"/>
</dbReference>
<dbReference type="CD-CODE" id="4299E36E">
    <property type="entry name" value="Nucleolus"/>
</dbReference>
<dbReference type="PRO" id="PR:Q9SJL8"/>
<dbReference type="Proteomes" id="UP000006548">
    <property type="component" value="Chromosome 2"/>
</dbReference>
<dbReference type="ExpressionAtlas" id="Q9SJL8">
    <property type="expression patterns" value="baseline and differential"/>
</dbReference>
<dbReference type="GO" id="GO:0005829">
    <property type="term" value="C:cytosol"/>
    <property type="evidence" value="ECO:0007005"/>
    <property type="project" value="TAIR"/>
</dbReference>
<dbReference type="GO" id="GO:0005783">
    <property type="term" value="C:endoplasmic reticulum"/>
    <property type="evidence" value="ECO:0007005"/>
    <property type="project" value="TAIR"/>
</dbReference>
<dbReference type="GO" id="GO:0005634">
    <property type="term" value="C:nucleus"/>
    <property type="evidence" value="ECO:0000314"/>
    <property type="project" value="TAIR"/>
</dbReference>
<dbReference type="GO" id="GO:0009506">
    <property type="term" value="C:plasmodesma"/>
    <property type="evidence" value="ECO:0007005"/>
    <property type="project" value="TAIR"/>
</dbReference>
<dbReference type="GO" id="GO:0005524">
    <property type="term" value="F:ATP binding"/>
    <property type="evidence" value="ECO:0007669"/>
    <property type="project" value="UniProtKB-KW"/>
</dbReference>
<dbReference type="GO" id="GO:0005507">
    <property type="term" value="F:copper ion binding"/>
    <property type="evidence" value="ECO:0007005"/>
    <property type="project" value="TAIR"/>
</dbReference>
<dbReference type="GO" id="GO:0004478">
    <property type="term" value="F:methionine adenosyltransferase activity"/>
    <property type="evidence" value="ECO:0000315"/>
    <property type="project" value="TAIR"/>
</dbReference>
<dbReference type="GO" id="GO:0009809">
    <property type="term" value="P:lignin biosynthetic process"/>
    <property type="evidence" value="ECO:0007669"/>
    <property type="project" value="UniProtKB-KW"/>
</dbReference>
<dbReference type="GO" id="GO:0006730">
    <property type="term" value="P:one-carbon metabolic process"/>
    <property type="evidence" value="ECO:0007669"/>
    <property type="project" value="UniProtKB-KW"/>
</dbReference>
<dbReference type="GO" id="GO:0009860">
    <property type="term" value="P:pollen tube growth"/>
    <property type="evidence" value="ECO:0000315"/>
    <property type="project" value="TAIR"/>
</dbReference>
<dbReference type="GO" id="GO:0006556">
    <property type="term" value="P:S-adenosylmethionine biosynthetic process"/>
    <property type="evidence" value="ECO:0007669"/>
    <property type="project" value="UniProtKB-UniPathway"/>
</dbReference>
<dbReference type="CDD" id="cd18079">
    <property type="entry name" value="S-AdoMet_synt"/>
    <property type="match status" value="1"/>
</dbReference>
<dbReference type="FunFam" id="3.30.300.10:FF:000001">
    <property type="entry name" value="S-adenosylmethionine synthase"/>
    <property type="match status" value="1"/>
</dbReference>
<dbReference type="FunFam" id="3.30.300.10:FF:000003">
    <property type="entry name" value="S-adenosylmethionine synthase"/>
    <property type="match status" value="1"/>
</dbReference>
<dbReference type="FunFam" id="3.30.300.10:FF:000004">
    <property type="entry name" value="S-adenosylmethionine synthase"/>
    <property type="match status" value="1"/>
</dbReference>
<dbReference type="Gene3D" id="3.30.300.10">
    <property type="match status" value="3"/>
</dbReference>
<dbReference type="HAMAP" id="MF_00086">
    <property type="entry name" value="S_AdoMet_synth1"/>
    <property type="match status" value="1"/>
</dbReference>
<dbReference type="InterPro" id="IPR022631">
    <property type="entry name" value="ADOMET_SYNTHASE_CS"/>
</dbReference>
<dbReference type="InterPro" id="IPR022630">
    <property type="entry name" value="S-AdoMet_synt_C"/>
</dbReference>
<dbReference type="InterPro" id="IPR022629">
    <property type="entry name" value="S-AdoMet_synt_central"/>
</dbReference>
<dbReference type="InterPro" id="IPR022628">
    <property type="entry name" value="S-AdoMet_synt_N"/>
</dbReference>
<dbReference type="InterPro" id="IPR002133">
    <property type="entry name" value="S-AdoMet_synthetase"/>
</dbReference>
<dbReference type="InterPro" id="IPR022636">
    <property type="entry name" value="S-AdoMet_synthetase_sfam"/>
</dbReference>
<dbReference type="NCBIfam" id="TIGR01034">
    <property type="entry name" value="metK"/>
    <property type="match status" value="1"/>
</dbReference>
<dbReference type="PANTHER" id="PTHR11964">
    <property type="entry name" value="S-ADENOSYLMETHIONINE SYNTHETASE"/>
    <property type="match status" value="1"/>
</dbReference>
<dbReference type="Pfam" id="PF02773">
    <property type="entry name" value="S-AdoMet_synt_C"/>
    <property type="match status" value="1"/>
</dbReference>
<dbReference type="Pfam" id="PF02772">
    <property type="entry name" value="S-AdoMet_synt_M"/>
    <property type="match status" value="1"/>
</dbReference>
<dbReference type="Pfam" id="PF00438">
    <property type="entry name" value="S-AdoMet_synt_N"/>
    <property type="match status" value="1"/>
</dbReference>
<dbReference type="PIRSF" id="PIRSF000497">
    <property type="entry name" value="MAT"/>
    <property type="match status" value="1"/>
</dbReference>
<dbReference type="SUPFAM" id="SSF55973">
    <property type="entry name" value="S-adenosylmethionine synthetase"/>
    <property type="match status" value="3"/>
</dbReference>
<dbReference type="PROSITE" id="PS00376">
    <property type="entry name" value="ADOMET_SYNTHASE_1"/>
    <property type="match status" value="1"/>
</dbReference>
<dbReference type="PROSITE" id="PS00377">
    <property type="entry name" value="ADOMET_SYNTHASE_2"/>
    <property type="match status" value="1"/>
</dbReference>
<protein>
    <recommendedName>
        <fullName>S-adenosylmethionine synthase 3</fullName>
        <shortName>AdoMet synthase 3</shortName>
        <ecNumber evidence="8">2.5.1.6</ecNumber>
    </recommendedName>
    <alternativeName>
        <fullName>Methionine adenosyltransferase 3</fullName>
        <shortName>MAT 3</shortName>
    </alternativeName>
</protein>
<sequence length="390" mass="42497">METFLFTSESVNEGHPDKLCDQISDAILDACLEQDPESKVACETCTKTNMVMVFGEITTAAKVDYEKIVRSTCREIGFISADVGLDADKCNVLVNIEQQSPDIAQGVHGHLTKKPEDIGAGDQGHMFGYATDETPELMPLTHVLATKLGAKLTEVRKNKTCPWLRPDGKTQVTVEYKNDGGAMIPIRVHTVLISTQHDETVTNDEIAADLKEHVIKPVIPAKYLDDNTIFHLNPSGRFVIGGPHGDAGLTGRKIIIDTYGGWGAHGGGAFSGKDPTKVDRSGAYIVRQAAKSVVAAGLARRCIVQVSYAIGVPEPLSVFVDTYKTGTIPDKDILVLIKEAFDFRPGMMAINLDLKRGGNFRFQKTAAYGHFGRDDPDFTWEVVKPLKPKA</sequence>
<comment type="function">
    <text evidence="6 7 8">Catalyzes the formation of S-adenosylmethionine from methionine and ATP. The reaction comprises two steps that are both catalyzed by the same enzyme: formation of S-adenosylmethionine (AdoMet) and triphosphate, and subsequent hydrolysis of the triphosphate (PubMed:12087191, PubMed:16365035). Involved in the biosynthesis of lignin (PubMed:11844113).</text>
</comment>
<comment type="catalytic activity">
    <reaction evidence="8">
        <text>L-methionine + ATP + H2O = S-adenosyl-L-methionine + phosphate + diphosphate</text>
        <dbReference type="Rhea" id="RHEA:21080"/>
        <dbReference type="ChEBI" id="CHEBI:15377"/>
        <dbReference type="ChEBI" id="CHEBI:30616"/>
        <dbReference type="ChEBI" id="CHEBI:33019"/>
        <dbReference type="ChEBI" id="CHEBI:43474"/>
        <dbReference type="ChEBI" id="CHEBI:57844"/>
        <dbReference type="ChEBI" id="CHEBI:59789"/>
        <dbReference type="EC" id="2.5.1.6"/>
    </reaction>
</comment>
<comment type="cofactor">
    <cofactor evidence="4">
        <name>Mn(2+)</name>
        <dbReference type="ChEBI" id="CHEBI:29035"/>
    </cofactor>
    <cofactor evidence="11">
        <name>Mg(2+)</name>
        <dbReference type="ChEBI" id="CHEBI:18420"/>
    </cofactor>
    <cofactor evidence="4">
        <name>Co(2+)</name>
        <dbReference type="ChEBI" id="CHEBI:48828"/>
    </cofactor>
    <text evidence="2 4">Binds 2 divalent ions per subunit. The metal ions interact primarily with the substrate (By similarity). Can utilize magnesium, manganese or cobalt (in vitro) (By similarity).</text>
</comment>
<comment type="cofactor">
    <cofactor evidence="11">
        <name>K(+)</name>
        <dbReference type="ChEBI" id="CHEBI:29103"/>
    </cofactor>
    <text evidence="2">Binds 1 potassium ion per subunit. The potassium ion interacts primarily with the substrate (By similarity).</text>
</comment>
<comment type="activity regulation">
    <text evidence="8">Inhibited by 5,5'-dithiobis-2-nitrobenzoic acid (DTNB) and N-ethylmaleimide (NEM) (in vitro).</text>
</comment>
<comment type="pathway">
    <text evidence="7 8">Amino-acid biosynthesis; S-adenosyl-L-methionine biosynthesis; S-adenosyl-L-methionine from L-methionine: step 1/1.</text>
</comment>
<comment type="subunit">
    <text evidence="3 9">Homotetramer (By similarity). Interacts with GRF3.</text>
</comment>
<comment type="subcellular location">
    <subcellularLocation>
        <location evidence="5">Cytoplasm</location>
    </subcellularLocation>
</comment>
<comment type="similarity">
    <text evidence="10">Belongs to the AdoMet synthase family.</text>
</comment>
<accession>Q9SJL8</accession>
<organism>
    <name type="scientific">Arabidopsis thaliana</name>
    <name type="common">Mouse-ear cress</name>
    <dbReference type="NCBI Taxonomy" id="3702"/>
    <lineage>
        <taxon>Eukaryota</taxon>
        <taxon>Viridiplantae</taxon>
        <taxon>Streptophyta</taxon>
        <taxon>Embryophyta</taxon>
        <taxon>Tracheophyta</taxon>
        <taxon>Spermatophyta</taxon>
        <taxon>Magnoliopsida</taxon>
        <taxon>eudicotyledons</taxon>
        <taxon>Gunneridae</taxon>
        <taxon>Pentapetalae</taxon>
        <taxon>rosids</taxon>
        <taxon>malvids</taxon>
        <taxon>Brassicales</taxon>
        <taxon>Brassicaceae</taxon>
        <taxon>Camelineae</taxon>
        <taxon>Arabidopsis</taxon>
    </lineage>
</organism>
<proteinExistence type="evidence at protein level"/>
<keyword id="KW-0067">ATP-binding</keyword>
<keyword id="KW-0170">Cobalt</keyword>
<keyword id="KW-0963">Cytoplasm</keyword>
<keyword id="KW-0438">Lignin biosynthesis</keyword>
<keyword id="KW-0460">Magnesium</keyword>
<keyword id="KW-0479">Metal-binding</keyword>
<keyword id="KW-0547">Nucleotide-binding</keyword>
<keyword id="KW-0554">One-carbon metabolism</keyword>
<keyword id="KW-0630">Potassium</keyword>
<keyword id="KW-1185">Reference proteome</keyword>
<keyword id="KW-0808">Transferase</keyword>
<reference key="1">
    <citation type="journal article" date="1999" name="Nature">
        <title>Sequence and analysis of chromosome 2 of the plant Arabidopsis thaliana.</title>
        <authorList>
            <person name="Lin X."/>
            <person name="Kaul S."/>
            <person name="Rounsley S.D."/>
            <person name="Shea T.P."/>
            <person name="Benito M.-I."/>
            <person name="Town C.D."/>
            <person name="Fujii C.Y."/>
            <person name="Mason T.M."/>
            <person name="Bowman C.L."/>
            <person name="Barnstead M.E."/>
            <person name="Feldblyum T.V."/>
            <person name="Buell C.R."/>
            <person name="Ketchum K.A."/>
            <person name="Lee J.J."/>
            <person name="Ronning C.M."/>
            <person name="Koo H.L."/>
            <person name="Moffat K.S."/>
            <person name="Cronin L.A."/>
            <person name="Shen M."/>
            <person name="Pai G."/>
            <person name="Van Aken S."/>
            <person name="Umayam L."/>
            <person name="Tallon L.J."/>
            <person name="Gill J.E."/>
            <person name="Adams M.D."/>
            <person name="Carrera A.J."/>
            <person name="Creasy T.H."/>
            <person name="Goodman H.M."/>
            <person name="Somerville C.R."/>
            <person name="Copenhaver G.P."/>
            <person name="Preuss D."/>
            <person name="Nierman W.C."/>
            <person name="White O."/>
            <person name="Eisen J.A."/>
            <person name="Salzberg S.L."/>
            <person name="Fraser C.M."/>
            <person name="Venter J.C."/>
        </authorList>
    </citation>
    <scope>NUCLEOTIDE SEQUENCE [LARGE SCALE GENOMIC DNA]</scope>
    <source>
        <strain>cv. Columbia</strain>
    </source>
</reference>
<reference key="2">
    <citation type="journal article" date="2017" name="Plant J.">
        <title>Araport11: a complete reannotation of the Arabidopsis thaliana reference genome.</title>
        <authorList>
            <person name="Cheng C.Y."/>
            <person name="Krishnakumar V."/>
            <person name="Chan A.P."/>
            <person name="Thibaud-Nissen F."/>
            <person name="Schobel S."/>
            <person name="Town C.D."/>
        </authorList>
    </citation>
    <scope>GENOME REANNOTATION</scope>
    <source>
        <strain>cv. Columbia</strain>
    </source>
</reference>
<reference key="3">
    <citation type="journal article" date="2003" name="Science">
        <title>Empirical analysis of transcriptional activity in the Arabidopsis genome.</title>
        <authorList>
            <person name="Yamada K."/>
            <person name="Lim J."/>
            <person name="Dale J.M."/>
            <person name="Chen H."/>
            <person name="Shinn P."/>
            <person name="Palm C.J."/>
            <person name="Southwick A.M."/>
            <person name="Wu H.C."/>
            <person name="Kim C.J."/>
            <person name="Nguyen M."/>
            <person name="Pham P.K."/>
            <person name="Cheuk R.F."/>
            <person name="Karlin-Newmann G."/>
            <person name="Liu S.X."/>
            <person name="Lam B."/>
            <person name="Sakano H."/>
            <person name="Wu T."/>
            <person name="Yu G."/>
            <person name="Miranda M."/>
            <person name="Quach H.L."/>
            <person name="Tripp M."/>
            <person name="Chang C.H."/>
            <person name="Lee J.M."/>
            <person name="Toriumi M.J."/>
            <person name="Chan M.M."/>
            <person name="Tang C.C."/>
            <person name="Onodera C.S."/>
            <person name="Deng J.M."/>
            <person name="Akiyama K."/>
            <person name="Ansari Y."/>
            <person name="Arakawa T."/>
            <person name="Banh J."/>
            <person name="Banno F."/>
            <person name="Bowser L."/>
            <person name="Brooks S.Y."/>
            <person name="Carninci P."/>
            <person name="Chao Q."/>
            <person name="Choy N."/>
            <person name="Enju A."/>
            <person name="Goldsmith A.D."/>
            <person name="Gurjal M."/>
            <person name="Hansen N.F."/>
            <person name="Hayashizaki Y."/>
            <person name="Johnson-Hopson C."/>
            <person name="Hsuan V.W."/>
            <person name="Iida K."/>
            <person name="Karnes M."/>
            <person name="Khan S."/>
            <person name="Koesema E."/>
            <person name="Ishida J."/>
            <person name="Jiang P.X."/>
            <person name="Jones T."/>
            <person name="Kawai J."/>
            <person name="Kamiya A."/>
            <person name="Meyers C."/>
            <person name="Nakajima M."/>
            <person name="Narusaka M."/>
            <person name="Seki M."/>
            <person name="Sakurai T."/>
            <person name="Satou M."/>
            <person name="Tamse R."/>
            <person name="Vaysberg M."/>
            <person name="Wallender E.K."/>
            <person name="Wong C."/>
            <person name="Yamamura Y."/>
            <person name="Yuan S."/>
            <person name="Shinozaki K."/>
            <person name="Davis R.W."/>
            <person name="Theologis A."/>
            <person name="Ecker J.R."/>
        </authorList>
    </citation>
    <scope>NUCLEOTIDE SEQUENCE [LARGE SCALE MRNA]</scope>
    <source>
        <strain>cv. Columbia</strain>
    </source>
</reference>
<reference key="4">
    <citation type="journal article" date="2002" name="Genes Genet. Syst.">
        <title>A single-nucleotide mutation in a gene encoding S-adenosylmethionine synthetase is associated with methionine over-accumulation phenotype in Arabidopsis thaliana.</title>
        <authorList>
            <person name="Goto D.B."/>
            <person name="Ogi M."/>
            <person name="Kijima F."/>
            <person name="Kumagai T."/>
            <person name="van Werven F."/>
            <person name="Onouchi H."/>
            <person name="Naito S."/>
        </authorList>
    </citation>
    <scope>FUNCTION</scope>
    <scope>MUTAGENESIS OF ASP-167</scope>
    <scope>PATHWAY</scope>
</reference>
<reference key="5">
    <citation type="journal article" date="2002" name="Plant J.">
        <title>High free-methionine and decreased lignin content result from a mutation in the Arabidopsis S-adenosyl-L-methionine synthetase 3 gene.</title>
        <authorList>
            <person name="Shen B."/>
            <person name="Li C."/>
            <person name="Tarczynski M.C."/>
        </authorList>
    </citation>
    <scope>FUNCTION</scope>
    <scope>MUTAGENESIS OF ALA-120</scope>
</reference>
<reference key="6">
    <citation type="journal article" date="2006" name="J. Biol. Chem.">
        <title>Differential inhibition of Arabidopsis methionine adenosyltransferases by protein S-nitrosylation.</title>
        <authorList>
            <person name="Lindermayr C."/>
            <person name="Saalbach G."/>
            <person name="Bahnweg G."/>
            <person name="Durner J."/>
        </authorList>
    </citation>
    <scope>FUNCTION</scope>
    <scope>ACTIVITY REGULATION</scope>
    <scope>CATALYTIC ACTIVITY</scope>
    <scope>PATHWAY</scope>
    <scope>COFACTOR</scope>
</reference>
<reference key="7">
    <citation type="journal article" date="2011" name="FEBS Lett.">
        <title>14-3-3 proteins fine-tune plant nutrient metabolism.</title>
        <authorList>
            <person name="Shin R."/>
            <person name="Jez J.M."/>
            <person name="Basra A."/>
            <person name="Zhang B."/>
            <person name="Schachtman D.P."/>
        </authorList>
    </citation>
    <scope>INTERACTION WITH GRF3</scope>
</reference>
<gene>
    <name type="primary">METK3</name>
    <name type="ordered locus">At2g36880</name>
    <name type="ORF">T1J8.6</name>
</gene>
<name>METK3_ARATH</name>
<evidence type="ECO:0000250" key="1">
    <source>
        <dbReference type="UniProtKB" id="P0A817"/>
    </source>
</evidence>
<evidence type="ECO:0000250" key="2">
    <source>
        <dbReference type="UniProtKB" id="P13444"/>
    </source>
</evidence>
<evidence type="ECO:0000250" key="3">
    <source>
        <dbReference type="UniProtKB" id="Q00266"/>
    </source>
</evidence>
<evidence type="ECO:0000250" key="4">
    <source>
        <dbReference type="UniProtKB" id="Q96551"/>
    </source>
</evidence>
<evidence type="ECO:0000250" key="5">
    <source>
        <dbReference type="UniProtKB" id="Q9LUT2"/>
    </source>
</evidence>
<evidence type="ECO:0000269" key="6">
    <source>
    </source>
</evidence>
<evidence type="ECO:0000269" key="7">
    <source>
    </source>
</evidence>
<evidence type="ECO:0000269" key="8">
    <source>
    </source>
</evidence>
<evidence type="ECO:0000269" key="9">
    <source>
    </source>
</evidence>
<evidence type="ECO:0000305" key="10"/>
<evidence type="ECO:0000305" key="11">
    <source>
    </source>
</evidence>
<feature type="chain" id="PRO_0000363003" description="S-adenosylmethionine synthase 3">
    <location>
        <begin position="1"/>
        <end position="390"/>
    </location>
</feature>
<feature type="binding site" evidence="2">
    <location>
        <position position="9"/>
    </location>
    <ligand>
        <name>Mg(2+)</name>
        <dbReference type="ChEBI" id="CHEBI:18420"/>
    </ligand>
</feature>
<feature type="binding site" description="in other chain" evidence="3">
    <location>
        <position position="15"/>
    </location>
    <ligand>
        <name>ATP</name>
        <dbReference type="ChEBI" id="CHEBI:30616"/>
        <note>ligand shared between two neighboring subunits</note>
    </ligand>
</feature>
<feature type="binding site" evidence="1">
    <location>
        <position position="43"/>
    </location>
    <ligand>
        <name>K(+)</name>
        <dbReference type="ChEBI" id="CHEBI:29103"/>
    </ligand>
</feature>
<feature type="binding site" description="in other chain" evidence="1">
    <location>
        <position position="56"/>
    </location>
    <ligand>
        <name>L-methionine</name>
        <dbReference type="ChEBI" id="CHEBI:57844"/>
        <note>ligand shared between two neighboring subunits</note>
    </ligand>
</feature>
<feature type="binding site" description="in other chain" evidence="1">
    <location>
        <position position="99"/>
    </location>
    <ligand>
        <name>L-methionine</name>
        <dbReference type="ChEBI" id="CHEBI:57844"/>
        <note>ligand shared between two neighboring subunits</note>
    </ligand>
</feature>
<feature type="binding site" description="in other chain" evidence="3">
    <location>
        <begin position="167"/>
        <end position="169"/>
    </location>
    <ligand>
        <name>ATP</name>
        <dbReference type="ChEBI" id="CHEBI:30616"/>
        <note>ligand shared between two neighboring subunits</note>
    </ligand>
</feature>
<feature type="binding site" description="in other chain" evidence="3">
    <location>
        <begin position="235"/>
        <end position="238"/>
    </location>
    <ligand>
        <name>ATP</name>
        <dbReference type="ChEBI" id="CHEBI:30616"/>
        <note>ligand shared between two neighboring subunits</note>
    </ligand>
</feature>
<feature type="binding site" description="in other chain" evidence="3">
    <location>
        <position position="246"/>
    </location>
    <ligand>
        <name>ATP</name>
        <dbReference type="ChEBI" id="CHEBI:30616"/>
        <note>ligand shared between two neighboring subunits</note>
    </ligand>
</feature>
<feature type="binding site" evidence="1">
    <location>
        <position position="246"/>
    </location>
    <ligand>
        <name>L-methionine</name>
        <dbReference type="ChEBI" id="CHEBI:57844"/>
        <note>ligand shared between two neighboring subunits</note>
    </ligand>
</feature>
<feature type="binding site" description="in other chain" evidence="1">
    <location>
        <begin position="252"/>
        <end position="253"/>
    </location>
    <ligand>
        <name>ATP</name>
        <dbReference type="ChEBI" id="CHEBI:30616"/>
        <note>ligand shared between two neighboring subunits</note>
    </ligand>
</feature>
<feature type="binding site" evidence="1">
    <location>
        <position position="269"/>
    </location>
    <ligand>
        <name>ATP</name>
        <dbReference type="ChEBI" id="CHEBI:30616"/>
        <note>ligand shared between two neighboring subunits</note>
    </ligand>
</feature>
<feature type="binding site" evidence="1">
    <location>
        <position position="273"/>
    </location>
    <ligand>
        <name>ATP</name>
        <dbReference type="ChEBI" id="CHEBI:30616"/>
        <note>ligand shared between two neighboring subunits</note>
    </ligand>
</feature>
<feature type="binding site" evidence="2">
    <location>
        <position position="277"/>
    </location>
    <ligand>
        <name>ATP</name>
        <dbReference type="ChEBI" id="CHEBI:30616"/>
        <note>ligand shared between two neighboring subunits</note>
    </ligand>
</feature>
<feature type="binding site" description="in other chain" evidence="1">
    <location>
        <position position="277"/>
    </location>
    <ligand>
        <name>L-methionine</name>
        <dbReference type="ChEBI" id="CHEBI:57844"/>
        <note>ligand shared between two neighboring subunits</note>
    </ligand>
</feature>
<feature type="mutagenesis site" description="In mto3-1; accumulation of free Met, increased resistance to Ethionine, and reduced lignin formation." evidence="6">
    <original>A</original>
    <variation>T</variation>
    <location>
        <position position="120"/>
    </location>
</feature>
<feature type="mutagenesis site" description="In mto3-2; accumulation of free Met and increased resistance to Ethionine." evidence="7">
    <original>D</original>
    <variation>N</variation>
    <location>
        <position position="167"/>
    </location>
</feature>